<protein>
    <recommendedName>
        <fullName evidence="1">Outer-membrane lipoprotein LolB</fullName>
    </recommendedName>
</protein>
<feature type="signal peptide" evidence="1">
    <location>
        <begin position="1"/>
        <end position="21"/>
    </location>
</feature>
<feature type="chain" id="PRO_1000100516" description="Outer-membrane lipoprotein LolB">
    <location>
        <begin position="22"/>
        <end position="207"/>
    </location>
</feature>
<feature type="lipid moiety-binding region" description="N-palmitoyl cysteine" evidence="1">
    <location>
        <position position="22"/>
    </location>
</feature>
<feature type="lipid moiety-binding region" description="S-diacylglycerol cysteine" evidence="1">
    <location>
        <position position="22"/>
    </location>
</feature>
<proteinExistence type="inferred from homology"/>
<sequence>MPMRKRHFYRLLPLASLLLAACTIPVSKGPATSPTSPQWRQHEQQLQQLGQFETRGAFAYLSDKQKVYARFFWQQTSPERYRLLLTNPLGSTELELVVQPGVTQLTDNQGKHYVSDDPQEMIQKLTGMSIPLESLRQWILGLPGDTPNFTLDDKYRLKKLTYQQNGVTWVVDYQEYNTQVTPPLPSRLELNQDGQRIKLKMDSWTIK</sequence>
<reference key="1">
    <citation type="submission" date="2008-02" db="EMBL/GenBank/DDBJ databases">
        <title>Complete sequence of Yersinia pseudotuberculosis YPIII.</title>
        <authorList>
            <consortium name="US DOE Joint Genome Institute"/>
            <person name="Copeland A."/>
            <person name="Lucas S."/>
            <person name="Lapidus A."/>
            <person name="Glavina del Rio T."/>
            <person name="Dalin E."/>
            <person name="Tice H."/>
            <person name="Bruce D."/>
            <person name="Goodwin L."/>
            <person name="Pitluck S."/>
            <person name="Munk A.C."/>
            <person name="Brettin T."/>
            <person name="Detter J.C."/>
            <person name="Han C."/>
            <person name="Tapia R."/>
            <person name="Schmutz J."/>
            <person name="Larimer F."/>
            <person name="Land M."/>
            <person name="Hauser L."/>
            <person name="Challacombe J.F."/>
            <person name="Green L."/>
            <person name="Lindler L.E."/>
            <person name="Nikolich M.P."/>
            <person name="Richardson P."/>
        </authorList>
    </citation>
    <scope>NUCLEOTIDE SEQUENCE [LARGE SCALE GENOMIC DNA]</scope>
    <source>
        <strain>YPIII</strain>
    </source>
</reference>
<evidence type="ECO:0000255" key="1">
    <source>
        <dbReference type="HAMAP-Rule" id="MF_00233"/>
    </source>
</evidence>
<organism>
    <name type="scientific">Yersinia pseudotuberculosis serotype O:3 (strain YPIII)</name>
    <dbReference type="NCBI Taxonomy" id="502800"/>
    <lineage>
        <taxon>Bacteria</taxon>
        <taxon>Pseudomonadati</taxon>
        <taxon>Pseudomonadota</taxon>
        <taxon>Gammaproteobacteria</taxon>
        <taxon>Enterobacterales</taxon>
        <taxon>Yersiniaceae</taxon>
        <taxon>Yersinia</taxon>
    </lineage>
</organism>
<name>LOLB_YERPY</name>
<gene>
    <name evidence="1" type="primary">lolB</name>
    <name type="ordered locus">YPK_2181</name>
</gene>
<accession>B1JM87</accession>
<comment type="function">
    <text evidence="1">Plays a critical role in the incorporation of lipoproteins in the outer membrane after they are released by the LolA protein.</text>
</comment>
<comment type="subunit">
    <text evidence="1">Monomer.</text>
</comment>
<comment type="subcellular location">
    <subcellularLocation>
        <location evidence="1">Cell outer membrane</location>
        <topology evidence="1">Lipid-anchor</topology>
    </subcellularLocation>
</comment>
<comment type="similarity">
    <text evidence="1">Belongs to the LolB family.</text>
</comment>
<keyword id="KW-0998">Cell outer membrane</keyword>
<keyword id="KW-0143">Chaperone</keyword>
<keyword id="KW-0449">Lipoprotein</keyword>
<keyword id="KW-0472">Membrane</keyword>
<keyword id="KW-0564">Palmitate</keyword>
<keyword id="KW-0653">Protein transport</keyword>
<keyword id="KW-0732">Signal</keyword>
<keyword id="KW-0813">Transport</keyword>
<dbReference type="EMBL" id="CP000950">
    <property type="protein sequence ID" value="ACA68464.1"/>
    <property type="molecule type" value="Genomic_DNA"/>
</dbReference>
<dbReference type="RefSeq" id="WP_012304120.1">
    <property type="nucleotide sequence ID" value="NZ_CP009792.1"/>
</dbReference>
<dbReference type="SMR" id="B1JM87"/>
<dbReference type="KEGG" id="ypy:YPK_2181"/>
<dbReference type="PATRIC" id="fig|502800.11.peg.2855"/>
<dbReference type="GO" id="GO:0009279">
    <property type="term" value="C:cell outer membrane"/>
    <property type="evidence" value="ECO:0007669"/>
    <property type="project" value="UniProtKB-SubCell"/>
</dbReference>
<dbReference type="GO" id="GO:0044874">
    <property type="term" value="P:lipoprotein localization to outer membrane"/>
    <property type="evidence" value="ECO:0007669"/>
    <property type="project" value="UniProtKB-UniRule"/>
</dbReference>
<dbReference type="GO" id="GO:0015031">
    <property type="term" value="P:protein transport"/>
    <property type="evidence" value="ECO:0007669"/>
    <property type="project" value="UniProtKB-KW"/>
</dbReference>
<dbReference type="CDD" id="cd16326">
    <property type="entry name" value="LolB"/>
    <property type="match status" value="1"/>
</dbReference>
<dbReference type="Gene3D" id="2.50.20.10">
    <property type="entry name" value="Lipoprotein localisation LolA/LolB/LppX"/>
    <property type="match status" value="1"/>
</dbReference>
<dbReference type="HAMAP" id="MF_00233">
    <property type="entry name" value="LolB"/>
    <property type="match status" value="1"/>
</dbReference>
<dbReference type="InterPro" id="IPR029046">
    <property type="entry name" value="LolA/LolB/LppX"/>
</dbReference>
<dbReference type="InterPro" id="IPR004565">
    <property type="entry name" value="OM_lipoprot_LolB"/>
</dbReference>
<dbReference type="NCBIfam" id="TIGR00548">
    <property type="entry name" value="lolB"/>
    <property type="match status" value="1"/>
</dbReference>
<dbReference type="Pfam" id="PF03550">
    <property type="entry name" value="LolB"/>
    <property type="match status" value="1"/>
</dbReference>
<dbReference type="SUPFAM" id="SSF89392">
    <property type="entry name" value="Prokaryotic lipoproteins and lipoprotein localization factors"/>
    <property type="match status" value="1"/>
</dbReference>
<dbReference type="PROSITE" id="PS51257">
    <property type="entry name" value="PROKAR_LIPOPROTEIN"/>
    <property type="match status" value="1"/>
</dbReference>